<accession>Q5HZH7</accession>
<keyword id="KW-0029">Amino-acid transport</keyword>
<keyword id="KW-0966">Cell projection</keyword>
<keyword id="KW-0963">Cytoplasm</keyword>
<keyword id="KW-0472">Membrane</keyword>
<keyword id="KW-1185">Reference proteome</keyword>
<keyword id="KW-0812">Transmembrane</keyword>
<keyword id="KW-1133">Transmembrane helix</keyword>
<keyword id="KW-0813">Transport</keyword>
<protein>
    <recommendedName>
        <fullName>Solute carrier family 38 member 8</fullName>
    </recommendedName>
    <alternativeName>
        <fullName evidence="6">Amino acid transporter SLC38A8</fullName>
    </alternativeName>
</protein>
<organism>
    <name type="scientific">Mus musculus</name>
    <name type="common">Mouse</name>
    <dbReference type="NCBI Taxonomy" id="10090"/>
    <lineage>
        <taxon>Eukaryota</taxon>
        <taxon>Metazoa</taxon>
        <taxon>Chordata</taxon>
        <taxon>Craniata</taxon>
        <taxon>Vertebrata</taxon>
        <taxon>Euteleostomi</taxon>
        <taxon>Mammalia</taxon>
        <taxon>Eutheria</taxon>
        <taxon>Euarchontoglires</taxon>
        <taxon>Glires</taxon>
        <taxon>Rodentia</taxon>
        <taxon>Myomorpha</taxon>
        <taxon>Muroidea</taxon>
        <taxon>Muridae</taxon>
        <taxon>Murinae</taxon>
        <taxon>Mus</taxon>
        <taxon>Mus</taxon>
    </lineage>
</organism>
<name>S38A8_MOUSE</name>
<sequence length="432" mass="46898">MEGQPRGSRGPLEKPLPAATHPTLSSLGAVFILLKSALGAGLLNFPWAFYKAGGMLPTFLVALVSLVFLISGLVILGYAASVSGQTTYQGVVRELCGPAMGKLCEICFLTNLLMISVAFLRVIGDQLEKLCDSLLPDAPQPWYAAQNFTLPLISMLVIFPLSALREIALQKYTSILGTLAACYLALVITVQYYLWPQGLIRQPGPLLSPSPWTSVFSVFPTICFGFQCHEAAVSIYCSMWNQSLSHWTLVSVLSLLACCLVYTLTGVYGFLTFGPEVSADILMSYPGNDTAIIVARVLFAVSIVTVYPIVLFLGRSVMQDFWKKSYWATRGPPVLADPSGPWVRLPLTFLWVVVTLTMALFLPDLSEIISIIGGVSSFFIFIFPGLCLICAVDTEPMGPRVKCCLEAWGILSVLVGTFIFGQSTAVAMVELL</sequence>
<evidence type="ECO:0000255" key="1"/>
<evidence type="ECO:0000269" key="2">
    <source>
    </source>
</evidence>
<evidence type="ECO:0000269" key="3">
    <source>
    </source>
</evidence>
<evidence type="ECO:0000303" key="4">
    <source>
    </source>
</evidence>
<evidence type="ECO:0000305" key="5"/>
<evidence type="ECO:0000305" key="6">
    <source>
    </source>
</evidence>
<evidence type="ECO:0000312" key="7">
    <source>
        <dbReference type="MGI" id="MGI:2685433"/>
    </source>
</evidence>
<reference key="1">
    <citation type="journal article" date="2004" name="Genome Res.">
        <title>The status, quality, and expansion of the NIH full-length cDNA project: the Mammalian Gene Collection (MGC).</title>
        <authorList>
            <consortium name="The MGC Project Team"/>
        </authorList>
    </citation>
    <scope>NUCLEOTIDE SEQUENCE [LARGE SCALE MRNA]</scope>
    <source>
        <strain>C57BL/6J</strain>
        <tissue>Eye</tissue>
    </source>
</reference>
<reference key="2">
    <citation type="journal article" date="2014" name="Eur. J. Hum. Genet.">
        <title>Isolated foveal hypoplasia with secondary nystagmus and low vision is associated with a homozygous SLC38A8 mutation.</title>
        <authorList>
            <person name="Perez Y."/>
            <person name="Gradstein L."/>
            <person name="Flusser H."/>
            <person name="Markus B."/>
            <person name="Cohen I."/>
            <person name="Langer Y."/>
            <person name="Marcus M."/>
            <person name="Lifshitz T."/>
            <person name="Kadir R."/>
            <person name="Birk O.S."/>
        </authorList>
    </citation>
    <scope>TISSUE SPECIFICITY</scope>
</reference>
<reference key="3">
    <citation type="journal article" date="2015" name="J. Mol. Biol.">
        <title>Transport of L-glutamine, L-alanine, L-arginine and L-histidine by the neuron-specific Slc38a8 (SNAT8) in CNS.</title>
        <authorList>
            <person name="Haegglund M.G.A."/>
            <person name="Hellsten S.V."/>
            <person name="Bagchi S."/>
            <person name="Philippot G."/>
            <person name="Loefqvist E."/>
            <person name="Nilsson V.C.O."/>
            <person name="Almkvist I."/>
            <person name="Karlsson E."/>
            <person name="Sreedharan S."/>
            <person name="Tafreshiha A."/>
            <person name="Fredriksson R."/>
        </authorList>
    </citation>
    <scope>FUNCTION</scope>
    <scope>TRANSPORTER ACTIVITY</scope>
    <scope>TISSUE SPECIFICITY</scope>
    <scope>SUBCELLULAR LOCATION</scope>
</reference>
<dbReference type="EMBL" id="BC089013">
    <property type="protein sequence ID" value="AAH89013.1"/>
    <property type="molecule type" value="mRNA"/>
</dbReference>
<dbReference type="CCDS" id="CCDS22706.1"/>
<dbReference type="RefSeq" id="NP_001009950.1">
    <property type="nucleotide sequence ID" value="NM_001009950.2"/>
</dbReference>
<dbReference type="SMR" id="Q5HZH7"/>
<dbReference type="FunCoup" id="Q5HZH7">
    <property type="interactions" value="2"/>
</dbReference>
<dbReference type="STRING" id="10090.ENSMUSP00000038438"/>
<dbReference type="PhosphoSitePlus" id="Q5HZH7"/>
<dbReference type="PaxDb" id="10090-ENSMUSP00000038438"/>
<dbReference type="Antibodypedia" id="67804">
    <property type="antibodies" value="68 antibodies from 14 providers"/>
</dbReference>
<dbReference type="DNASU" id="234788"/>
<dbReference type="Ensembl" id="ENSMUST00000036748.15">
    <property type="protein sequence ID" value="ENSMUSP00000038438.9"/>
    <property type="gene ID" value="ENSMUSG00000034224.15"/>
</dbReference>
<dbReference type="GeneID" id="234788"/>
<dbReference type="KEGG" id="mmu:234788"/>
<dbReference type="UCSC" id="uc009npr.1">
    <property type="organism name" value="mouse"/>
</dbReference>
<dbReference type="AGR" id="MGI:2685433"/>
<dbReference type="CTD" id="146167"/>
<dbReference type="MGI" id="MGI:2685433">
    <property type="gene designation" value="Slc38a8"/>
</dbReference>
<dbReference type="VEuPathDB" id="HostDB:ENSMUSG00000034224"/>
<dbReference type="eggNOG" id="KOG1305">
    <property type="taxonomic scope" value="Eukaryota"/>
</dbReference>
<dbReference type="GeneTree" id="ENSGT00940000157764"/>
<dbReference type="HOGENOM" id="CLU_038973_0_0_1"/>
<dbReference type="InParanoid" id="Q5HZH7"/>
<dbReference type="OMA" id="QDFWKRS"/>
<dbReference type="OrthoDB" id="438545at2759"/>
<dbReference type="PhylomeDB" id="Q5HZH7"/>
<dbReference type="TreeFam" id="TF328787"/>
<dbReference type="BioGRID-ORCS" id="234788">
    <property type="hits" value="5 hits in 78 CRISPR screens"/>
</dbReference>
<dbReference type="ChiTaRS" id="Slc38a8">
    <property type="organism name" value="mouse"/>
</dbReference>
<dbReference type="PRO" id="PR:Q5HZH7"/>
<dbReference type="Proteomes" id="UP000000589">
    <property type="component" value="Chromosome 8"/>
</dbReference>
<dbReference type="RNAct" id="Q5HZH7">
    <property type="molecule type" value="protein"/>
</dbReference>
<dbReference type="Bgee" id="ENSMUSG00000034224">
    <property type="expression patterns" value="Expressed in secondary oocyte and 22 other cell types or tissues"/>
</dbReference>
<dbReference type="ExpressionAtlas" id="Q5HZH7">
    <property type="expression patterns" value="baseline and differential"/>
</dbReference>
<dbReference type="GO" id="GO:0030424">
    <property type="term" value="C:axon"/>
    <property type="evidence" value="ECO:0007669"/>
    <property type="project" value="UniProtKB-SubCell"/>
</dbReference>
<dbReference type="GO" id="GO:0005938">
    <property type="term" value="C:cell cortex"/>
    <property type="evidence" value="ECO:0007669"/>
    <property type="project" value="UniProtKB-SubCell"/>
</dbReference>
<dbReference type="GO" id="GO:0016020">
    <property type="term" value="C:membrane"/>
    <property type="evidence" value="ECO:0007669"/>
    <property type="project" value="UniProtKB-SubCell"/>
</dbReference>
<dbReference type="GO" id="GO:0006865">
    <property type="term" value="P:amino acid transport"/>
    <property type="evidence" value="ECO:0007669"/>
    <property type="project" value="UniProtKB-KW"/>
</dbReference>
<dbReference type="GO" id="GO:0006531">
    <property type="term" value="P:aspartate metabolic process"/>
    <property type="evidence" value="ECO:0000315"/>
    <property type="project" value="MGI"/>
</dbReference>
<dbReference type="GO" id="GO:0031175">
    <property type="term" value="P:neuron projection development"/>
    <property type="evidence" value="ECO:0000315"/>
    <property type="project" value="MGI"/>
</dbReference>
<dbReference type="GO" id="GO:0021554">
    <property type="term" value="P:optic nerve development"/>
    <property type="evidence" value="ECO:0000315"/>
    <property type="project" value="MGI"/>
</dbReference>
<dbReference type="GO" id="GO:0009615">
    <property type="term" value="P:response to virus"/>
    <property type="evidence" value="ECO:0000315"/>
    <property type="project" value="MGI"/>
</dbReference>
<dbReference type="GO" id="GO:0060041">
    <property type="term" value="P:retina development in camera-type eye"/>
    <property type="evidence" value="ECO:0000315"/>
    <property type="project" value="MGI"/>
</dbReference>
<dbReference type="GO" id="GO:0003406">
    <property type="term" value="P:retinal pigment epithelium development"/>
    <property type="evidence" value="ECO:0000315"/>
    <property type="project" value="MGI"/>
</dbReference>
<dbReference type="GO" id="GO:0019079">
    <property type="term" value="P:viral genome replication"/>
    <property type="evidence" value="ECO:0000315"/>
    <property type="project" value="MGI"/>
</dbReference>
<dbReference type="GO" id="GO:0007601">
    <property type="term" value="P:visual perception"/>
    <property type="evidence" value="ECO:0000315"/>
    <property type="project" value="MGI"/>
</dbReference>
<dbReference type="FunFam" id="1.20.1740.10:FF:000038">
    <property type="entry name" value="Putative sodium-coupled neutral amino acid transporter 7"/>
    <property type="match status" value="1"/>
</dbReference>
<dbReference type="Gene3D" id="1.20.1740.10">
    <property type="entry name" value="Amino acid/polyamine transporter I"/>
    <property type="match status" value="1"/>
</dbReference>
<dbReference type="InterPro" id="IPR013057">
    <property type="entry name" value="AA_transpt_TM"/>
</dbReference>
<dbReference type="PANTHER" id="PTHR22950">
    <property type="entry name" value="AMINO ACID TRANSPORTER"/>
    <property type="match status" value="1"/>
</dbReference>
<dbReference type="PANTHER" id="PTHR22950:SF226">
    <property type="entry name" value="SODIUM-COUPLED NEUTRAL AMINO ACID TRANSPORTER 8-RELATED"/>
    <property type="match status" value="1"/>
</dbReference>
<dbReference type="Pfam" id="PF01490">
    <property type="entry name" value="Aa_trans"/>
    <property type="match status" value="1"/>
</dbReference>
<feature type="chain" id="PRO_0000319594" description="Solute carrier family 38 member 8">
    <location>
        <begin position="1"/>
        <end position="432"/>
    </location>
</feature>
<feature type="transmembrane region" description="Helical" evidence="1">
    <location>
        <begin position="29"/>
        <end position="49"/>
    </location>
</feature>
<feature type="transmembrane region" description="Helical" evidence="1">
    <location>
        <begin position="59"/>
        <end position="79"/>
    </location>
</feature>
<feature type="transmembrane region" description="Helical" evidence="1">
    <location>
        <begin position="103"/>
        <end position="123"/>
    </location>
</feature>
<feature type="transmembrane region" description="Helical" evidence="1">
    <location>
        <begin position="144"/>
        <end position="164"/>
    </location>
</feature>
<feature type="transmembrane region" description="Helical" evidence="1">
    <location>
        <begin position="175"/>
        <end position="195"/>
    </location>
</feature>
<feature type="transmembrane region" description="Helical" evidence="1">
    <location>
        <begin position="215"/>
        <end position="237"/>
    </location>
</feature>
<feature type="transmembrane region" description="Helical" evidence="1">
    <location>
        <begin position="253"/>
        <end position="273"/>
    </location>
</feature>
<feature type="transmembrane region" description="Helical" evidence="1">
    <location>
        <begin position="292"/>
        <end position="312"/>
    </location>
</feature>
<feature type="transmembrane region" description="Helical" evidence="1">
    <location>
        <begin position="345"/>
        <end position="365"/>
    </location>
</feature>
<feature type="transmembrane region" description="Helical" evidence="1">
    <location>
        <begin position="368"/>
        <end position="388"/>
    </location>
</feature>
<feature type="transmembrane region" description="Helical" evidence="1">
    <location>
        <begin position="409"/>
        <end position="429"/>
    </location>
</feature>
<proteinExistence type="evidence at protein level"/>
<gene>
    <name evidence="4 7" type="primary">Slc38a8</name>
    <name type="synonym">Gm587</name>
</gene>
<comment type="function">
    <text evidence="3">Electrogenic sodium-dependent amino acid transporter with a preference for L-glutamine, L-alanine, L-histidine, L-aspartate and L-arginine. May facilitate glutamine uptake in both excitatory and inhibitory neurons. The transport mechanism and stoichiometry remain to be elucidated.</text>
</comment>
<comment type="catalytic activity">
    <reaction evidence="3">
        <text>L-glutamine(out) = L-glutamine(in)</text>
        <dbReference type="Rhea" id="RHEA:73419"/>
        <dbReference type="ChEBI" id="CHEBI:58359"/>
    </reaction>
</comment>
<comment type="catalytic activity">
    <reaction evidence="3">
        <text>L-alanine(in) = L-alanine(out)</text>
        <dbReference type="Rhea" id="RHEA:70719"/>
        <dbReference type="ChEBI" id="CHEBI:57972"/>
    </reaction>
</comment>
<comment type="catalytic activity">
    <reaction evidence="3">
        <text>L-histidine(out) = L-histidine(in)</text>
        <dbReference type="Rhea" id="RHEA:72807"/>
        <dbReference type="ChEBI" id="CHEBI:57595"/>
    </reaction>
</comment>
<comment type="catalytic activity">
    <reaction evidence="3">
        <text>L-aspartate(out) = L-aspartate(in)</text>
        <dbReference type="Rhea" id="RHEA:66332"/>
        <dbReference type="ChEBI" id="CHEBI:29991"/>
    </reaction>
</comment>
<comment type="catalytic activity">
    <reaction evidence="3">
        <text>L-arginine(in) = L-arginine(out)</text>
        <dbReference type="Rhea" id="RHEA:32143"/>
        <dbReference type="ChEBI" id="CHEBI:32682"/>
    </reaction>
</comment>
<comment type="catalytic activity">
    <reaction evidence="3">
        <text>L-leucine(in) = L-leucine(out)</text>
        <dbReference type="Rhea" id="RHEA:73011"/>
        <dbReference type="ChEBI" id="CHEBI:57427"/>
    </reaction>
</comment>
<comment type="subcellular location">
    <subcellularLocation>
        <location evidence="3">Membrane</location>
        <topology evidence="1">Multi-pass membrane protein</topology>
    </subcellularLocation>
    <subcellularLocation>
        <location evidence="3">Cytoplasm</location>
        <location evidence="3">Cell cortex</location>
    </subcellularLocation>
    <subcellularLocation>
        <location evidence="3">Cell projection</location>
        <location evidence="3">Axon</location>
    </subcellularLocation>
</comment>
<comment type="tissue specificity">
    <text evidence="2 3">Expressed in neurons located in the gray matter. Highly expressed in thalamus, hypothalamus, amygdala and pons. Expressed in the CA3 area of hippocampus and in the Purkinje layer of the cerebellum (at protein level) (PubMed:25451601). Expressed in the eye.</text>
</comment>
<comment type="similarity">
    <text evidence="5">Belongs to the amino acid/polyamine transporter 2 family.</text>
</comment>